<sequence length="137" mass="15414">MTKTELLWPALITALATMLYLVLVINVGRARAKYGVMPPATTGNEDFERVLRVQYNTLEQLAFFLPGLWLFAIYRDPTIAAILGAVWLLGRILYAWGYYQAAEKRMVGFALGSLSSMILVVGALLSILWQLRQLSQF</sequence>
<reference key="1">
    <citation type="journal article" date="1996" name="DNA Res.">
        <title>Sequence analysis of the genome of the unicellular cyanobacterium Synechocystis sp. strain PCC6803. II. Sequence determination of the entire genome and assignment of potential protein-coding regions.</title>
        <authorList>
            <person name="Kaneko T."/>
            <person name="Sato S."/>
            <person name="Kotani H."/>
            <person name="Tanaka A."/>
            <person name="Asamizu E."/>
            <person name="Nakamura Y."/>
            <person name="Miyajima N."/>
            <person name="Hirosawa M."/>
            <person name="Sugiura M."/>
            <person name="Sasamoto S."/>
            <person name="Kimura T."/>
            <person name="Hosouchi T."/>
            <person name="Matsuno A."/>
            <person name="Muraki A."/>
            <person name="Nakazaki N."/>
            <person name="Naruo K."/>
            <person name="Okumura S."/>
            <person name="Shimpo S."/>
            <person name="Takeuchi C."/>
            <person name="Wada T."/>
            <person name="Watanabe A."/>
            <person name="Yamada M."/>
            <person name="Yasuda M."/>
            <person name="Tabata S."/>
        </authorList>
    </citation>
    <scope>NUCLEOTIDE SEQUENCE [LARGE SCALE GENOMIC DNA]</scope>
    <source>
        <strain>ATCC 27184 / PCC 6803 / Kazusa</strain>
    </source>
</reference>
<comment type="subcellular location">
    <subcellularLocation>
        <location evidence="2">Cell membrane</location>
        <topology evidence="2">Multi-pass membrane protein</topology>
    </subcellularLocation>
</comment>
<comment type="similarity">
    <text evidence="2">Belongs to the MAPEG family.</text>
</comment>
<protein>
    <recommendedName>
        <fullName>Uncharacterized protein sll1147</fullName>
    </recommendedName>
</protein>
<name>Y1147_SYNY3</name>
<proteinExistence type="inferred from homology"/>
<gene>
    <name type="ordered locus">sll1147</name>
</gene>
<organism>
    <name type="scientific">Synechocystis sp. (strain ATCC 27184 / PCC 6803 / Kazusa)</name>
    <dbReference type="NCBI Taxonomy" id="1111708"/>
    <lineage>
        <taxon>Bacteria</taxon>
        <taxon>Bacillati</taxon>
        <taxon>Cyanobacteriota</taxon>
        <taxon>Cyanophyceae</taxon>
        <taxon>Synechococcales</taxon>
        <taxon>Merismopediaceae</taxon>
        <taxon>Synechocystis</taxon>
    </lineage>
</organism>
<keyword id="KW-1003">Cell membrane</keyword>
<keyword id="KW-0472">Membrane</keyword>
<keyword id="KW-1185">Reference proteome</keyword>
<keyword id="KW-0812">Transmembrane</keyword>
<keyword id="KW-1133">Transmembrane helix</keyword>
<accession>P73795</accession>
<evidence type="ECO:0000255" key="1"/>
<evidence type="ECO:0000305" key="2"/>
<feature type="chain" id="PRO_0000217758" description="Uncharacterized protein sll1147">
    <location>
        <begin position="1"/>
        <end position="137"/>
    </location>
</feature>
<feature type="transmembrane region" description="Helical" evidence="1">
    <location>
        <begin position="5"/>
        <end position="25"/>
    </location>
</feature>
<feature type="transmembrane region" description="Helical" evidence="1">
    <location>
        <begin position="79"/>
        <end position="99"/>
    </location>
</feature>
<feature type="transmembrane region" description="Helical" evidence="1">
    <location>
        <begin position="109"/>
        <end position="129"/>
    </location>
</feature>
<dbReference type="EMBL" id="BA000022">
    <property type="protein sequence ID" value="BAA17849.1"/>
    <property type="molecule type" value="Genomic_DNA"/>
</dbReference>
<dbReference type="PIR" id="S74888">
    <property type="entry name" value="S74888"/>
</dbReference>
<dbReference type="SMR" id="P73795"/>
<dbReference type="STRING" id="1148.gene:10498717"/>
<dbReference type="PaxDb" id="1148-1652931"/>
<dbReference type="EnsemblBacteria" id="BAA17849">
    <property type="protein sequence ID" value="BAA17849"/>
    <property type="gene ID" value="BAA17849"/>
</dbReference>
<dbReference type="KEGG" id="syn:sll1147"/>
<dbReference type="eggNOG" id="COG3788">
    <property type="taxonomic scope" value="Bacteria"/>
</dbReference>
<dbReference type="InParanoid" id="P73795"/>
<dbReference type="PhylomeDB" id="P73795"/>
<dbReference type="Proteomes" id="UP000001425">
    <property type="component" value="Chromosome"/>
</dbReference>
<dbReference type="GO" id="GO:0005886">
    <property type="term" value="C:plasma membrane"/>
    <property type="evidence" value="ECO:0007669"/>
    <property type="project" value="UniProtKB-SubCell"/>
</dbReference>
<dbReference type="GO" id="GO:0004602">
    <property type="term" value="F:glutathione peroxidase activity"/>
    <property type="evidence" value="ECO:0000318"/>
    <property type="project" value="GO_Central"/>
</dbReference>
<dbReference type="GO" id="GO:0004364">
    <property type="term" value="F:glutathione transferase activity"/>
    <property type="evidence" value="ECO:0000318"/>
    <property type="project" value="GO_Central"/>
</dbReference>
<dbReference type="GO" id="GO:0006691">
    <property type="term" value="P:leukotriene metabolic process"/>
    <property type="evidence" value="ECO:0007669"/>
    <property type="project" value="UniProtKB-ARBA"/>
</dbReference>
<dbReference type="FunFam" id="1.20.120.550:FF:000003">
    <property type="entry name" value="Leukotriene C4 synthase"/>
    <property type="match status" value="1"/>
</dbReference>
<dbReference type="Gene3D" id="1.20.120.550">
    <property type="entry name" value="Membrane associated eicosanoid/glutathione metabolism-like domain"/>
    <property type="match status" value="1"/>
</dbReference>
<dbReference type="InterPro" id="IPR050997">
    <property type="entry name" value="MAPEG"/>
</dbReference>
<dbReference type="InterPro" id="IPR023352">
    <property type="entry name" value="MAPEG-like_dom_sf"/>
</dbReference>
<dbReference type="InterPro" id="IPR001129">
    <property type="entry name" value="Membr-assoc_MAPEG"/>
</dbReference>
<dbReference type="PANTHER" id="PTHR10250">
    <property type="entry name" value="MICROSOMAL GLUTATHIONE S-TRANSFERASE"/>
    <property type="match status" value="1"/>
</dbReference>
<dbReference type="PANTHER" id="PTHR10250:SF15">
    <property type="entry name" value="MICROSOMAL GLUTATHIONE S-TRANSFERASE-RELATED"/>
    <property type="match status" value="1"/>
</dbReference>
<dbReference type="Pfam" id="PF01124">
    <property type="entry name" value="MAPEG"/>
    <property type="match status" value="1"/>
</dbReference>
<dbReference type="SUPFAM" id="SSF161084">
    <property type="entry name" value="MAPEG domain-like"/>
    <property type="match status" value="1"/>
</dbReference>